<protein>
    <recommendedName>
        <fullName evidence="1">Large ribosomal subunit protein bL17</fullName>
    </recommendedName>
    <alternativeName>
        <fullName evidence="2">50S ribosomal protein L17</fullName>
    </alternativeName>
</protein>
<evidence type="ECO:0000255" key="1">
    <source>
        <dbReference type="HAMAP-Rule" id="MF_01368"/>
    </source>
</evidence>
<evidence type="ECO:0000305" key="2"/>
<name>RL17_HAEIG</name>
<accession>A5UHV6</accession>
<gene>
    <name evidence="1" type="primary">rplQ</name>
    <name type="ordered locus">CGSHiGG_07515</name>
</gene>
<keyword id="KW-0687">Ribonucleoprotein</keyword>
<keyword id="KW-0689">Ribosomal protein</keyword>
<feature type="chain" id="PRO_1000055838" description="Large ribosomal subunit protein bL17">
    <location>
        <begin position="1"/>
        <end position="128"/>
    </location>
</feature>
<comment type="subunit">
    <text evidence="1">Part of the 50S ribosomal subunit. Contacts protein L32.</text>
</comment>
<comment type="similarity">
    <text evidence="1">Belongs to the bacterial ribosomal protein bL17 family.</text>
</comment>
<organism>
    <name type="scientific">Haemophilus influenzae (strain PittGG)</name>
    <dbReference type="NCBI Taxonomy" id="374931"/>
    <lineage>
        <taxon>Bacteria</taxon>
        <taxon>Pseudomonadati</taxon>
        <taxon>Pseudomonadota</taxon>
        <taxon>Gammaproteobacteria</taxon>
        <taxon>Pasteurellales</taxon>
        <taxon>Pasteurellaceae</taxon>
        <taxon>Haemophilus</taxon>
    </lineage>
</organism>
<sequence length="128" mass="14473">MRHRKSGRQLNRNSSHRQAMFRNLASALVSHEIIKTTLPKAKELRRVVEPLITLAKVDSVANRRLAFARTRNVETVAKLFNELGPRFAQRAGGYTRILKCGFRAGDNAPMAYIELVDRPEVAEATTEE</sequence>
<reference key="1">
    <citation type="journal article" date="2007" name="Genome Biol.">
        <title>Characterization and modeling of the Haemophilus influenzae core and supragenomes based on the complete genomic sequences of Rd and 12 clinical nontypeable strains.</title>
        <authorList>
            <person name="Hogg J.S."/>
            <person name="Hu F.Z."/>
            <person name="Janto B."/>
            <person name="Boissy R."/>
            <person name="Hayes J."/>
            <person name="Keefe R."/>
            <person name="Post J.C."/>
            <person name="Ehrlich G.D."/>
        </authorList>
    </citation>
    <scope>NUCLEOTIDE SEQUENCE [LARGE SCALE GENOMIC DNA]</scope>
    <source>
        <strain>PittGG</strain>
    </source>
</reference>
<proteinExistence type="inferred from homology"/>
<dbReference type="EMBL" id="CP000672">
    <property type="protein sequence ID" value="ABR00362.1"/>
    <property type="molecule type" value="Genomic_DNA"/>
</dbReference>
<dbReference type="SMR" id="A5UHV6"/>
<dbReference type="KEGG" id="hiq:CGSHiGG_07515"/>
<dbReference type="HOGENOM" id="CLU_074407_2_0_6"/>
<dbReference type="Proteomes" id="UP000001990">
    <property type="component" value="Chromosome"/>
</dbReference>
<dbReference type="GO" id="GO:0022625">
    <property type="term" value="C:cytosolic large ribosomal subunit"/>
    <property type="evidence" value="ECO:0007669"/>
    <property type="project" value="TreeGrafter"/>
</dbReference>
<dbReference type="GO" id="GO:0003735">
    <property type="term" value="F:structural constituent of ribosome"/>
    <property type="evidence" value="ECO:0007669"/>
    <property type="project" value="InterPro"/>
</dbReference>
<dbReference type="GO" id="GO:0006412">
    <property type="term" value="P:translation"/>
    <property type="evidence" value="ECO:0007669"/>
    <property type="project" value="UniProtKB-UniRule"/>
</dbReference>
<dbReference type="FunFam" id="3.90.1030.10:FF:000001">
    <property type="entry name" value="50S ribosomal protein L17"/>
    <property type="match status" value="1"/>
</dbReference>
<dbReference type="Gene3D" id="3.90.1030.10">
    <property type="entry name" value="Ribosomal protein L17"/>
    <property type="match status" value="1"/>
</dbReference>
<dbReference type="HAMAP" id="MF_01368">
    <property type="entry name" value="Ribosomal_bL17"/>
    <property type="match status" value="1"/>
</dbReference>
<dbReference type="InterPro" id="IPR000456">
    <property type="entry name" value="Ribosomal_bL17"/>
</dbReference>
<dbReference type="InterPro" id="IPR047859">
    <property type="entry name" value="Ribosomal_bL17_CS"/>
</dbReference>
<dbReference type="InterPro" id="IPR036373">
    <property type="entry name" value="Ribosomal_bL17_sf"/>
</dbReference>
<dbReference type="NCBIfam" id="TIGR00059">
    <property type="entry name" value="L17"/>
    <property type="match status" value="1"/>
</dbReference>
<dbReference type="PANTHER" id="PTHR14413:SF16">
    <property type="entry name" value="LARGE RIBOSOMAL SUBUNIT PROTEIN BL17M"/>
    <property type="match status" value="1"/>
</dbReference>
<dbReference type="PANTHER" id="PTHR14413">
    <property type="entry name" value="RIBOSOMAL PROTEIN L17"/>
    <property type="match status" value="1"/>
</dbReference>
<dbReference type="Pfam" id="PF01196">
    <property type="entry name" value="Ribosomal_L17"/>
    <property type="match status" value="1"/>
</dbReference>
<dbReference type="SUPFAM" id="SSF64263">
    <property type="entry name" value="Prokaryotic ribosomal protein L17"/>
    <property type="match status" value="1"/>
</dbReference>
<dbReference type="PROSITE" id="PS01167">
    <property type="entry name" value="RIBOSOMAL_L17"/>
    <property type="match status" value="1"/>
</dbReference>